<dbReference type="EC" id="2.1.1.166" evidence="1"/>
<dbReference type="EMBL" id="CP000738">
    <property type="protein sequence ID" value="ABR59230.1"/>
    <property type="molecule type" value="Genomic_DNA"/>
</dbReference>
<dbReference type="RefSeq" id="WP_011974578.1">
    <property type="nucleotide sequence ID" value="NC_009636.1"/>
</dbReference>
<dbReference type="RefSeq" id="YP_001326065.1">
    <property type="nucleotide sequence ID" value="NC_009636.1"/>
</dbReference>
<dbReference type="SMR" id="A6U6F0"/>
<dbReference type="STRING" id="366394.Smed_0373"/>
<dbReference type="KEGG" id="smd:Smed_0373"/>
<dbReference type="PATRIC" id="fig|366394.8.peg.3448"/>
<dbReference type="eggNOG" id="COG0293">
    <property type="taxonomic scope" value="Bacteria"/>
</dbReference>
<dbReference type="HOGENOM" id="CLU_009422_4_0_5"/>
<dbReference type="OrthoDB" id="9790080at2"/>
<dbReference type="Proteomes" id="UP000001108">
    <property type="component" value="Chromosome"/>
</dbReference>
<dbReference type="GO" id="GO:0005737">
    <property type="term" value="C:cytoplasm"/>
    <property type="evidence" value="ECO:0007669"/>
    <property type="project" value="UniProtKB-SubCell"/>
</dbReference>
<dbReference type="GO" id="GO:0008650">
    <property type="term" value="F:rRNA (uridine-2'-O-)-methyltransferase activity"/>
    <property type="evidence" value="ECO:0007669"/>
    <property type="project" value="UniProtKB-UniRule"/>
</dbReference>
<dbReference type="Gene3D" id="3.40.50.150">
    <property type="entry name" value="Vaccinia Virus protein VP39"/>
    <property type="match status" value="1"/>
</dbReference>
<dbReference type="HAMAP" id="MF_01547">
    <property type="entry name" value="RNA_methyltr_E"/>
    <property type="match status" value="1"/>
</dbReference>
<dbReference type="InterPro" id="IPR050082">
    <property type="entry name" value="RNA_methyltr_RlmE"/>
</dbReference>
<dbReference type="InterPro" id="IPR002877">
    <property type="entry name" value="RNA_MeTrfase_FtsJ_dom"/>
</dbReference>
<dbReference type="InterPro" id="IPR015507">
    <property type="entry name" value="rRNA-MeTfrase_E"/>
</dbReference>
<dbReference type="InterPro" id="IPR029063">
    <property type="entry name" value="SAM-dependent_MTases_sf"/>
</dbReference>
<dbReference type="PANTHER" id="PTHR10920">
    <property type="entry name" value="RIBOSOMAL RNA METHYLTRANSFERASE"/>
    <property type="match status" value="1"/>
</dbReference>
<dbReference type="PANTHER" id="PTHR10920:SF18">
    <property type="entry name" value="RRNA METHYLTRANSFERASE 2, MITOCHONDRIAL"/>
    <property type="match status" value="1"/>
</dbReference>
<dbReference type="Pfam" id="PF01728">
    <property type="entry name" value="FtsJ"/>
    <property type="match status" value="1"/>
</dbReference>
<dbReference type="PIRSF" id="PIRSF005461">
    <property type="entry name" value="23S_rRNA_mtase"/>
    <property type="match status" value="1"/>
</dbReference>
<dbReference type="SUPFAM" id="SSF53335">
    <property type="entry name" value="S-adenosyl-L-methionine-dependent methyltransferases"/>
    <property type="match status" value="1"/>
</dbReference>
<sequence length="245" mass="26912">MTKPPVGSNRSGRKLGQKVKKGKLKASSRRWIERHINDPYVQRAQLEGYRARAAFKLLEIDEKHKILAGARRIIDLGAAPGSWSQIAAKVTNSTDTDPRVAAIDFLEMDAIPGVSFLQMDFLDPQAPEKLKEAIGGAPDIVLSDMAAPTTGHRQTDHIRTMHLCEVAAHFAVEVLAEGGHFLAKTFQGGTERDLLNMLKQNFRQVVHVKPASSRAESVEMFLLAKGFKGRHASRSDEPAEGAAEK</sequence>
<feature type="chain" id="PRO_1000087719" description="Ribosomal RNA large subunit methyltransferase E">
    <location>
        <begin position="1"/>
        <end position="245"/>
    </location>
</feature>
<feature type="region of interest" description="Disordered" evidence="2">
    <location>
        <begin position="1"/>
        <end position="26"/>
    </location>
</feature>
<feature type="compositionally biased region" description="Basic residues" evidence="2">
    <location>
        <begin position="11"/>
        <end position="26"/>
    </location>
</feature>
<feature type="active site" description="Proton acceptor" evidence="1">
    <location>
        <position position="184"/>
    </location>
</feature>
<feature type="binding site" evidence="1">
    <location>
        <position position="81"/>
    </location>
    <ligand>
        <name>S-adenosyl-L-methionine</name>
        <dbReference type="ChEBI" id="CHEBI:59789"/>
    </ligand>
</feature>
<feature type="binding site" evidence="1">
    <location>
        <position position="83"/>
    </location>
    <ligand>
        <name>S-adenosyl-L-methionine</name>
        <dbReference type="ChEBI" id="CHEBI:59789"/>
    </ligand>
</feature>
<feature type="binding site" evidence="1">
    <location>
        <position position="104"/>
    </location>
    <ligand>
        <name>S-adenosyl-L-methionine</name>
        <dbReference type="ChEBI" id="CHEBI:59789"/>
    </ligand>
</feature>
<feature type="binding site" evidence="1">
    <location>
        <position position="120"/>
    </location>
    <ligand>
        <name>S-adenosyl-L-methionine</name>
        <dbReference type="ChEBI" id="CHEBI:59789"/>
    </ligand>
</feature>
<feature type="binding site" evidence="1">
    <location>
        <position position="144"/>
    </location>
    <ligand>
        <name>S-adenosyl-L-methionine</name>
        <dbReference type="ChEBI" id="CHEBI:59789"/>
    </ligand>
</feature>
<evidence type="ECO:0000255" key="1">
    <source>
        <dbReference type="HAMAP-Rule" id="MF_01547"/>
    </source>
</evidence>
<evidence type="ECO:0000256" key="2">
    <source>
        <dbReference type="SAM" id="MobiDB-lite"/>
    </source>
</evidence>
<name>RLME_SINMW</name>
<gene>
    <name evidence="1" type="primary">rlmE</name>
    <name evidence="1" type="synonym">ftsJ</name>
    <name evidence="1" type="synonym">rrmJ</name>
    <name type="ordered locus">Smed_0373</name>
</gene>
<reference key="1">
    <citation type="submission" date="2007-06" db="EMBL/GenBank/DDBJ databases">
        <title>Complete sequence of Sinorhizobium medicae WSM419 chromosome.</title>
        <authorList>
            <consortium name="US DOE Joint Genome Institute"/>
            <person name="Copeland A."/>
            <person name="Lucas S."/>
            <person name="Lapidus A."/>
            <person name="Barry K."/>
            <person name="Glavina del Rio T."/>
            <person name="Dalin E."/>
            <person name="Tice H."/>
            <person name="Pitluck S."/>
            <person name="Chain P."/>
            <person name="Malfatti S."/>
            <person name="Shin M."/>
            <person name="Vergez L."/>
            <person name="Schmutz J."/>
            <person name="Larimer F."/>
            <person name="Land M."/>
            <person name="Hauser L."/>
            <person name="Kyrpides N."/>
            <person name="Mikhailova N."/>
            <person name="Reeve W.G."/>
            <person name="Richardson P."/>
        </authorList>
    </citation>
    <scope>NUCLEOTIDE SEQUENCE [LARGE SCALE GENOMIC DNA]</scope>
    <source>
        <strain>WSM419</strain>
    </source>
</reference>
<accession>A6U6F0</accession>
<comment type="function">
    <text evidence="1">Specifically methylates the uridine in position 2552 of 23S rRNA at the 2'-O position of the ribose in the fully assembled 50S ribosomal subunit.</text>
</comment>
<comment type="catalytic activity">
    <reaction evidence="1">
        <text>uridine(2552) in 23S rRNA + S-adenosyl-L-methionine = 2'-O-methyluridine(2552) in 23S rRNA + S-adenosyl-L-homocysteine + H(+)</text>
        <dbReference type="Rhea" id="RHEA:42720"/>
        <dbReference type="Rhea" id="RHEA-COMP:10202"/>
        <dbReference type="Rhea" id="RHEA-COMP:10203"/>
        <dbReference type="ChEBI" id="CHEBI:15378"/>
        <dbReference type="ChEBI" id="CHEBI:57856"/>
        <dbReference type="ChEBI" id="CHEBI:59789"/>
        <dbReference type="ChEBI" id="CHEBI:65315"/>
        <dbReference type="ChEBI" id="CHEBI:74478"/>
        <dbReference type="EC" id="2.1.1.166"/>
    </reaction>
</comment>
<comment type="subcellular location">
    <subcellularLocation>
        <location evidence="1">Cytoplasm</location>
    </subcellularLocation>
</comment>
<comment type="similarity">
    <text evidence="1">Belongs to the class I-like SAM-binding methyltransferase superfamily. RNA methyltransferase RlmE family.</text>
</comment>
<organism>
    <name type="scientific">Sinorhizobium medicae (strain WSM419)</name>
    <name type="common">Ensifer medicae</name>
    <dbReference type="NCBI Taxonomy" id="366394"/>
    <lineage>
        <taxon>Bacteria</taxon>
        <taxon>Pseudomonadati</taxon>
        <taxon>Pseudomonadota</taxon>
        <taxon>Alphaproteobacteria</taxon>
        <taxon>Hyphomicrobiales</taxon>
        <taxon>Rhizobiaceae</taxon>
        <taxon>Sinorhizobium/Ensifer group</taxon>
        <taxon>Sinorhizobium</taxon>
    </lineage>
</organism>
<protein>
    <recommendedName>
        <fullName evidence="1">Ribosomal RNA large subunit methyltransferase E</fullName>
        <ecNumber evidence="1">2.1.1.166</ecNumber>
    </recommendedName>
    <alternativeName>
        <fullName evidence="1">23S rRNA Um2552 methyltransferase</fullName>
    </alternativeName>
    <alternativeName>
        <fullName evidence="1">rRNA (uridine-2'-O-)-methyltransferase</fullName>
    </alternativeName>
</protein>
<proteinExistence type="inferred from homology"/>
<keyword id="KW-0963">Cytoplasm</keyword>
<keyword id="KW-0489">Methyltransferase</keyword>
<keyword id="KW-0698">rRNA processing</keyword>
<keyword id="KW-0949">S-adenosyl-L-methionine</keyword>
<keyword id="KW-0808">Transferase</keyword>